<reference key="1">
    <citation type="journal article" date="2007" name="BMC Microbiol.">
        <title>Subtle genetic changes enhance virulence of methicillin resistant and sensitive Staphylococcus aureus.</title>
        <authorList>
            <person name="Highlander S.K."/>
            <person name="Hulten K.G."/>
            <person name="Qin X."/>
            <person name="Jiang H."/>
            <person name="Yerrapragada S."/>
            <person name="Mason E.O. Jr."/>
            <person name="Shang Y."/>
            <person name="Williams T.M."/>
            <person name="Fortunov R.M."/>
            <person name="Liu Y."/>
            <person name="Igboeli O."/>
            <person name="Petrosino J."/>
            <person name="Tirumalai M."/>
            <person name="Uzman A."/>
            <person name="Fox G.E."/>
            <person name="Cardenas A.M."/>
            <person name="Muzny D.M."/>
            <person name="Hemphill L."/>
            <person name="Ding Y."/>
            <person name="Dugan S."/>
            <person name="Blyth P.R."/>
            <person name="Buhay C.J."/>
            <person name="Dinh H.H."/>
            <person name="Hawes A.C."/>
            <person name="Holder M."/>
            <person name="Kovar C.L."/>
            <person name="Lee S.L."/>
            <person name="Liu W."/>
            <person name="Nazareth L.V."/>
            <person name="Wang Q."/>
            <person name="Zhou J."/>
            <person name="Kaplan S.L."/>
            <person name="Weinstock G.M."/>
        </authorList>
    </citation>
    <scope>NUCLEOTIDE SEQUENCE [LARGE SCALE GENOMIC DNA]</scope>
    <source>
        <strain>USA300 / TCH1516</strain>
    </source>
</reference>
<accession>A8Z387</accession>
<name>URE1_STAAT</name>
<proteinExistence type="inferred from homology"/>
<dbReference type="EC" id="3.5.1.5" evidence="1"/>
<dbReference type="EMBL" id="CP000730">
    <property type="protein sequence ID" value="ABX30264.1"/>
    <property type="molecule type" value="Genomic_DNA"/>
</dbReference>
<dbReference type="RefSeq" id="WP_000008673.1">
    <property type="nucleotide sequence ID" value="NC_010079.1"/>
</dbReference>
<dbReference type="SMR" id="A8Z387"/>
<dbReference type="MEROPS" id="M38.982"/>
<dbReference type="KEGG" id="sax:USA300HOU_2271"/>
<dbReference type="HOGENOM" id="CLU_000980_0_0_9"/>
<dbReference type="UniPathway" id="UPA00258">
    <property type="reaction ID" value="UER00370"/>
</dbReference>
<dbReference type="GO" id="GO:0005737">
    <property type="term" value="C:cytoplasm"/>
    <property type="evidence" value="ECO:0007669"/>
    <property type="project" value="UniProtKB-SubCell"/>
</dbReference>
<dbReference type="GO" id="GO:0016151">
    <property type="term" value="F:nickel cation binding"/>
    <property type="evidence" value="ECO:0007669"/>
    <property type="project" value="UniProtKB-UniRule"/>
</dbReference>
<dbReference type="GO" id="GO:0009039">
    <property type="term" value="F:urease activity"/>
    <property type="evidence" value="ECO:0007669"/>
    <property type="project" value="UniProtKB-UniRule"/>
</dbReference>
<dbReference type="GO" id="GO:0043419">
    <property type="term" value="P:urea catabolic process"/>
    <property type="evidence" value="ECO:0007669"/>
    <property type="project" value="UniProtKB-UniRule"/>
</dbReference>
<dbReference type="CDD" id="cd00375">
    <property type="entry name" value="Urease_alpha"/>
    <property type="match status" value="1"/>
</dbReference>
<dbReference type="Gene3D" id="3.20.20.140">
    <property type="entry name" value="Metal-dependent hydrolases"/>
    <property type="match status" value="1"/>
</dbReference>
<dbReference type="Gene3D" id="2.30.40.10">
    <property type="entry name" value="Urease, subunit C, domain 1"/>
    <property type="match status" value="1"/>
</dbReference>
<dbReference type="HAMAP" id="MF_01953">
    <property type="entry name" value="Urease_alpha"/>
    <property type="match status" value="1"/>
</dbReference>
<dbReference type="InterPro" id="IPR006680">
    <property type="entry name" value="Amidohydro-rel"/>
</dbReference>
<dbReference type="InterPro" id="IPR011059">
    <property type="entry name" value="Metal-dep_hydrolase_composite"/>
</dbReference>
<dbReference type="InterPro" id="IPR032466">
    <property type="entry name" value="Metal_Hydrolase"/>
</dbReference>
<dbReference type="InterPro" id="IPR011612">
    <property type="entry name" value="Urease_alpha_N_dom"/>
</dbReference>
<dbReference type="InterPro" id="IPR050112">
    <property type="entry name" value="Urease_alpha_subunit"/>
</dbReference>
<dbReference type="InterPro" id="IPR017950">
    <property type="entry name" value="Urease_AS"/>
</dbReference>
<dbReference type="InterPro" id="IPR005848">
    <property type="entry name" value="Urease_asu"/>
</dbReference>
<dbReference type="InterPro" id="IPR017951">
    <property type="entry name" value="Urease_asu_c"/>
</dbReference>
<dbReference type="InterPro" id="IPR029754">
    <property type="entry name" value="Urease_Ni-bd"/>
</dbReference>
<dbReference type="NCBIfam" id="NF009686">
    <property type="entry name" value="PRK13207.1"/>
    <property type="match status" value="1"/>
</dbReference>
<dbReference type="NCBIfam" id="TIGR01792">
    <property type="entry name" value="urease_alph"/>
    <property type="match status" value="1"/>
</dbReference>
<dbReference type="PANTHER" id="PTHR43440">
    <property type="entry name" value="UREASE"/>
    <property type="match status" value="1"/>
</dbReference>
<dbReference type="PANTHER" id="PTHR43440:SF1">
    <property type="entry name" value="UREASE"/>
    <property type="match status" value="1"/>
</dbReference>
<dbReference type="Pfam" id="PF01979">
    <property type="entry name" value="Amidohydro_1"/>
    <property type="match status" value="1"/>
</dbReference>
<dbReference type="Pfam" id="PF00449">
    <property type="entry name" value="Urease_alpha"/>
    <property type="match status" value="1"/>
</dbReference>
<dbReference type="PRINTS" id="PR01752">
    <property type="entry name" value="UREASE"/>
</dbReference>
<dbReference type="SUPFAM" id="SSF51338">
    <property type="entry name" value="Composite domain of metallo-dependent hydrolases"/>
    <property type="match status" value="1"/>
</dbReference>
<dbReference type="SUPFAM" id="SSF51556">
    <property type="entry name" value="Metallo-dependent hydrolases"/>
    <property type="match status" value="1"/>
</dbReference>
<dbReference type="PROSITE" id="PS01120">
    <property type="entry name" value="UREASE_1"/>
    <property type="match status" value="1"/>
</dbReference>
<dbReference type="PROSITE" id="PS00145">
    <property type="entry name" value="UREASE_2"/>
    <property type="match status" value="1"/>
</dbReference>
<dbReference type="PROSITE" id="PS51368">
    <property type="entry name" value="UREASE_3"/>
    <property type="match status" value="1"/>
</dbReference>
<organism>
    <name type="scientific">Staphylococcus aureus (strain USA300 / TCH1516)</name>
    <dbReference type="NCBI Taxonomy" id="451516"/>
    <lineage>
        <taxon>Bacteria</taxon>
        <taxon>Bacillati</taxon>
        <taxon>Bacillota</taxon>
        <taxon>Bacilli</taxon>
        <taxon>Bacillales</taxon>
        <taxon>Staphylococcaceae</taxon>
        <taxon>Staphylococcus</taxon>
    </lineage>
</organism>
<sequence length="571" mass="61780">MSFKMTQNQYTSLYGPTVGDSIRLGDTNLFAQIEKDYAVYGEEATFGGGKSIRDGMAQNPRVTRDDVNVADLVISNAVIIDYDKVVKADIGIKNGYIFAIGNAGNPDIMDNVDIIIGSTTDIIAAEGKIVTAGGIDTHVHFINPEQAEVALESGITTHIGGGTGASEGSKATTVTPGPWHIHRMLEAAEGLPINVGFTGKGQATNPTALIEQINAGAIGLKVHEDWGATPSALSHALDVADEFDVQIALHADTLNEAGFMEDTMAAVKDRVLHMYHTEGAGGGHAPDLIKSAAFSNILPSSTNPTLPYTHNTVDEHLDMVMITHHLNAAIPEDIAFADSRIRKETIAAEDVLQDMGVFSMISSDSQAMGRVGEVITRTWQVAHRMKEQRGPLDGDFEHNDNNRIKRYIAKYTINPAITHGISEYVGSIEPGKLADIVLWDPIFFGVKPELVVKGGLINSAVNGDANGSIPTSEPMKYRKMYGQYGGNLTSTSMTFVSKTAYENGINRALNLKRMVRPVKNIRQLSKADMKNNSATPKLDVDPQTYEVYVDGEKITSNAATELPLTQRYFLF</sequence>
<protein>
    <recommendedName>
        <fullName evidence="1">Urease subunit alpha</fullName>
        <ecNumber evidence="1">3.5.1.5</ecNumber>
    </recommendedName>
    <alternativeName>
        <fullName evidence="1">Urea amidohydrolase subunit alpha</fullName>
    </alternativeName>
</protein>
<keyword id="KW-0963">Cytoplasm</keyword>
<keyword id="KW-0378">Hydrolase</keyword>
<keyword id="KW-0479">Metal-binding</keyword>
<keyword id="KW-0533">Nickel</keyword>
<evidence type="ECO:0000255" key="1">
    <source>
        <dbReference type="HAMAP-Rule" id="MF_01953"/>
    </source>
</evidence>
<feature type="chain" id="PRO_1000088500" description="Urease subunit alpha">
    <location>
        <begin position="1"/>
        <end position="571"/>
    </location>
</feature>
<feature type="active site" description="Proton donor" evidence="1">
    <location>
        <position position="324"/>
    </location>
</feature>
<feature type="binding site" evidence="1">
    <location>
        <position position="138"/>
    </location>
    <ligand>
        <name>Ni(2+)</name>
        <dbReference type="ChEBI" id="CHEBI:49786"/>
        <label>1</label>
    </ligand>
</feature>
<feature type="binding site" evidence="1">
    <location>
        <position position="140"/>
    </location>
    <ligand>
        <name>Ni(2+)</name>
        <dbReference type="ChEBI" id="CHEBI:49786"/>
        <label>1</label>
    </ligand>
</feature>
<feature type="binding site" description="via carbamate group" evidence="1">
    <location>
        <position position="221"/>
    </location>
    <ligand>
        <name>Ni(2+)</name>
        <dbReference type="ChEBI" id="CHEBI:49786"/>
        <label>1</label>
    </ligand>
</feature>
<feature type="binding site" description="via carbamate group" evidence="1">
    <location>
        <position position="221"/>
    </location>
    <ligand>
        <name>Ni(2+)</name>
        <dbReference type="ChEBI" id="CHEBI:49786"/>
        <label>2</label>
    </ligand>
</feature>
<feature type="binding site" evidence="1">
    <location>
        <position position="223"/>
    </location>
    <ligand>
        <name>substrate</name>
    </ligand>
</feature>
<feature type="binding site" evidence="1">
    <location>
        <position position="250"/>
    </location>
    <ligand>
        <name>Ni(2+)</name>
        <dbReference type="ChEBI" id="CHEBI:49786"/>
        <label>2</label>
    </ligand>
</feature>
<feature type="binding site" evidence="1">
    <location>
        <position position="276"/>
    </location>
    <ligand>
        <name>Ni(2+)</name>
        <dbReference type="ChEBI" id="CHEBI:49786"/>
        <label>2</label>
    </ligand>
</feature>
<feature type="binding site" evidence="1">
    <location>
        <position position="364"/>
    </location>
    <ligand>
        <name>Ni(2+)</name>
        <dbReference type="ChEBI" id="CHEBI:49786"/>
        <label>1</label>
    </ligand>
</feature>
<feature type="modified residue" description="N6-carboxylysine" evidence="1">
    <location>
        <position position="221"/>
    </location>
</feature>
<gene>
    <name evidence="1" type="primary">ureC</name>
    <name type="ordered locus">USA300HOU_2271</name>
</gene>
<comment type="catalytic activity">
    <reaction evidence="1">
        <text>urea + 2 H2O + H(+) = hydrogencarbonate + 2 NH4(+)</text>
        <dbReference type="Rhea" id="RHEA:20557"/>
        <dbReference type="ChEBI" id="CHEBI:15377"/>
        <dbReference type="ChEBI" id="CHEBI:15378"/>
        <dbReference type="ChEBI" id="CHEBI:16199"/>
        <dbReference type="ChEBI" id="CHEBI:17544"/>
        <dbReference type="ChEBI" id="CHEBI:28938"/>
        <dbReference type="EC" id="3.5.1.5"/>
    </reaction>
</comment>
<comment type="cofactor">
    <cofactor evidence="1">
        <name>Ni cation</name>
        <dbReference type="ChEBI" id="CHEBI:25516"/>
    </cofactor>
    <text evidence="1">Binds 2 nickel ions per subunit.</text>
</comment>
<comment type="pathway">
    <text evidence="1">Nitrogen metabolism; urea degradation; CO(2) and NH(3) from urea (urease route): step 1/1.</text>
</comment>
<comment type="subunit">
    <text evidence="1">Heterotrimer of UreA (gamma), UreB (beta) and UreC (alpha) subunits. Three heterotrimers associate to form the active enzyme.</text>
</comment>
<comment type="subcellular location">
    <subcellularLocation>
        <location evidence="1">Cytoplasm</location>
    </subcellularLocation>
</comment>
<comment type="PTM">
    <text evidence="1">Carboxylation allows a single lysine to coordinate two nickel ions.</text>
</comment>
<comment type="similarity">
    <text evidence="1">Belongs to the metallo-dependent hydrolases superfamily. Urease alpha subunit family.</text>
</comment>